<reference key="1">
    <citation type="submission" date="1996-06" db="EMBL/GenBank/DDBJ databases">
        <authorList>
            <person name="Adkins R.M."/>
            <person name="Honeycutt R.L."/>
            <person name="Janecek L.L."/>
            <person name="Disotell T."/>
        </authorList>
    </citation>
    <scope>NUCLEOTIDE SEQUENCE [GENOMIC DNA]</scope>
</reference>
<feature type="chain" id="PRO_0000183544" description="Cytochrome c oxidase subunit 2">
    <location>
        <begin position="1"/>
        <end position="227"/>
    </location>
</feature>
<feature type="topological domain" description="Mitochondrial intermembrane" evidence="4">
    <location>
        <begin position="1"/>
        <end position="14"/>
    </location>
</feature>
<feature type="transmembrane region" description="Helical; Name=I" evidence="4">
    <location>
        <begin position="15"/>
        <end position="45"/>
    </location>
</feature>
<feature type="topological domain" description="Mitochondrial matrix" evidence="4">
    <location>
        <begin position="46"/>
        <end position="59"/>
    </location>
</feature>
<feature type="transmembrane region" description="Helical; Name=II" evidence="4">
    <location>
        <begin position="60"/>
        <end position="87"/>
    </location>
</feature>
<feature type="topological domain" description="Mitochondrial intermembrane" evidence="4">
    <location>
        <begin position="88"/>
        <end position="227"/>
    </location>
</feature>
<feature type="binding site" evidence="4">
    <location>
        <position position="161"/>
    </location>
    <ligand>
        <name>Cu cation</name>
        <dbReference type="ChEBI" id="CHEBI:23378"/>
        <label>A1</label>
    </ligand>
</feature>
<feature type="binding site" evidence="4">
    <location>
        <position position="196"/>
    </location>
    <ligand>
        <name>Cu cation</name>
        <dbReference type="ChEBI" id="CHEBI:23378"/>
        <label>A1</label>
    </ligand>
</feature>
<feature type="binding site" evidence="4">
    <location>
        <position position="196"/>
    </location>
    <ligand>
        <name>Cu cation</name>
        <dbReference type="ChEBI" id="CHEBI:23378"/>
        <label>A2</label>
    </ligand>
</feature>
<feature type="binding site" evidence="4">
    <location>
        <position position="198"/>
    </location>
    <ligand>
        <name>Cu cation</name>
        <dbReference type="ChEBI" id="CHEBI:23378"/>
        <label>A2</label>
    </ligand>
</feature>
<feature type="binding site" evidence="4">
    <location>
        <position position="198"/>
    </location>
    <ligand>
        <name>Mg(2+)</name>
        <dbReference type="ChEBI" id="CHEBI:18420"/>
        <note>ligand shared with MT-CO1</note>
    </ligand>
</feature>
<feature type="binding site" evidence="4">
    <location>
        <position position="200"/>
    </location>
    <ligand>
        <name>Cu cation</name>
        <dbReference type="ChEBI" id="CHEBI:23378"/>
        <label>A1</label>
    </ligand>
</feature>
<feature type="binding site" evidence="4">
    <location>
        <position position="200"/>
    </location>
    <ligand>
        <name>Cu cation</name>
        <dbReference type="ChEBI" id="CHEBI:23378"/>
        <label>A2</label>
    </ligand>
</feature>
<feature type="binding site" evidence="4">
    <location>
        <position position="204"/>
    </location>
    <ligand>
        <name>Cu cation</name>
        <dbReference type="ChEBI" id="CHEBI:23378"/>
        <label>A2</label>
    </ligand>
</feature>
<feature type="binding site" evidence="4">
    <location>
        <position position="207"/>
    </location>
    <ligand>
        <name>Cu cation</name>
        <dbReference type="ChEBI" id="CHEBI:23378"/>
        <label>A1</label>
    </ligand>
</feature>
<feature type="modified residue" description="Phosphotyrosine" evidence="2">
    <location>
        <position position="218"/>
    </location>
</feature>
<dbReference type="EC" id="7.1.1.9"/>
<dbReference type="EMBL" id="U62570">
    <property type="protein sequence ID" value="AAB05783.1"/>
    <property type="molecule type" value="Genomic_DNA"/>
</dbReference>
<dbReference type="RefSeq" id="YP_009317453.1">
    <property type="nucleotide sequence ID" value="NC_031835.1"/>
</dbReference>
<dbReference type="SMR" id="Q37440"/>
<dbReference type="GeneID" id="30218607"/>
<dbReference type="CTD" id="4513"/>
<dbReference type="GO" id="GO:0005743">
    <property type="term" value="C:mitochondrial inner membrane"/>
    <property type="evidence" value="ECO:0007669"/>
    <property type="project" value="UniProtKB-SubCell"/>
</dbReference>
<dbReference type="GO" id="GO:0045277">
    <property type="term" value="C:respiratory chain complex IV"/>
    <property type="evidence" value="ECO:0000250"/>
    <property type="project" value="UniProtKB"/>
</dbReference>
<dbReference type="GO" id="GO:0005507">
    <property type="term" value="F:copper ion binding"/>
    <property type="evidence" value="ECO:0007669"/>
    <property type="project" value="InterPro"/>
</dbReference>
<dbReference type="GO" id="GO:0004129">
    <property type="term" value="F:cytochrome-c oxidase activity"/>
    <property type="evidence" value="ECO:0007669"/>
    <property type="project" value="UniProtKB-EC"/>
</dbReference>
<dbReference type="GO" id="GO:0042773">
    <property type="term" value="P:ATP synthesis coupled electron transport"/>
    <property type="evidence" value="ECO:0007669"/>
    <property type="project" value="TreeGrafter"/>
</dbReference>
<dbReference type="CDD" id="cd13912">
    <property type="entry name" value="CcO_II_C"/>
    <property type="match status" value="1"/>
</dbReference>
<dbReference type="FunFam" id="1.10.287.90:FF:000001">
    <property type="entry name" value="Cytochrome c oxidase subunit 2"/>
    <property type="match status" value="1"/>
</dbReference>
<dbReference type="FunFam" id="2.60.40.420:FF:000001">
    <property type="entry name" value="Cytochrome c oxidase subunit 2"/>
    <property type="match status" value="1"/>
</dbReference>
<dbReference type="Gene3D" id="1.10.287.90">
    <property type="match status" value="1"/>
</dbReference>
<dbReference type="Gene3D" id="2.60.40.420">
    <property type="entry name" value="Cupredoxins - blue copper proteins"/>
    <property type="match status" value="1"/>
</dbReference>
<dbReference type="InterPro" id="IPR045187">
    <property type="entry name" value="CcO_II"/>
</dbReference>
<dbReference type="InterPro" id="IPR002429">
    <property type="entry name" value="CcO_II-like_C"/>
</dbReference>
<dbReference type="InterPro" id="IPR034210">
    <property type="entry name" value="CcO_II_C"/>
</dbReference>
<dbReference type="InterPro" id="IPR001505">
    <property type="entry name" value="Copper_CuA"/>
</dbReference>
<dbReference type="InterPro" id="IPR008972">
    <property type="entry name" value="Cupredoxin"/>
</dbReference>
<dbReference type="InterPro" id="IPR014222">
    <property type="entry name" value="Cyt_c_oxidase_su2"/>
</dbReference>
<dbReference type="InterPro" id="IPR011759">
    <property type="entry name" value="Cyt_c_oxidase_su2_TM_dom"/>
</dbReference>
<dbReference type="InterPro" id="IPR036257">
    <property type="entry name" value="Cyt_c_oxidase_su2_TM_sf"/>
</dbReference>
<dbReference type="NCBIfam" id="TIGR02866">
    <property type="entry name" value="CoxB"/>
    <property type="match status" value="1"/>
</dbReference>
<dbReference type="PANTHER" id="PTHR22888:SF9">
    <property type="entry name" value="CYTOCHROME C OXIDASE SUBUNIT 2"/>
    <property type="match status" value="1"/>
</dbReference>
<dbReference type="PANTHER" id="PTHR22888">
    <property type="entry name" value="CYTOCHROME C OXIDASE, SUBUNIT II"/>
    <property type="match status" value="1"/>
</dbReference>
<dbReference type="Pfam" id="PF00116">
    <property type="entry name" value="COX2"/>
    <property type="match status" value="1"/>
</dbReference>
<dbReference type="Pfam" id="PF02790">
    <property type="entry name" value="COX2_TM"/>
    <property type="match status" value="1"/>
</dbReference>
<dbReference type="PRINTS" id="PR01166">
    <property type="entry name" value="CYCOXIDASEII"/>
</dbReference>
<dbReference type="SUPFAM" id="SSF49503">
    <property type="entry name" value="Cupredoxins"/>
    <property type="match status" value="1"/>
</dbReference>
<dbReference type="SUPFAM" id="SSF81464">
    <property type="entry name" value="Cytochrome c oxidase subunit II-like, transmembrane region"/>
    <property type="match status" value="1"/>
</dbReference>
<dbReference type="PROSITE" id="PS00078">
    <property type="entry name" value="COX2"/>
    <property type="match status" value="1"/>
</dbReference>
<dbReference type="PROSITE" id="PS50857">
    <property type="entry name" value="COX2_CUA"/>
    <property type="match status" value="1"/>
</dbReference>
<dbReference type="PROSITE" id="PS50999">
    <property type="entry name" value="COX2_TM"/>
    <property type="match status" value="1"/>
</dbReference>
<protein>
    <recommendedName>
        <fullName>Cytochrome c oxidase subunit 2</fullName>
        <ecNumber>7.1.1.9</ecNumber>
    </recommendedName>
    <alternativeName>
        <fullName>Cytochrome c oxidase polypeptide II</fullName>
    </alternativeName>
</protein>
<gene>
    <name type="primary">MT-CO2</name>
    <name type="synonym">COII</name>
    <name type="synonym">COXII</name>
    <name type="synonym">MTCO2</name>
</gene>
<keyword id="KW-0186">Copper</keyword>
<keyword id="KW-0249">Electron transport</keyword>
<keyword id="KW-0460">Magnesium</keyword>
<keyword id="KW-0472">Membrane</keyword>
<keyword id="KW-0479">Metal-binding</keyword>
<keyword id="KW-0496">Mitochondrion</keyword>
<keyword id="KW-0999">Mitochondrion inner membrane</keyword>
<keyword id="KW-0597">Phosphoprotein</keyword>
<keyword id="KW-0679">Respiratory chain</keyword>
<keyword id="KW-1278">Translocase</keyword>
<keyword id="KW-0812">Transmembrane</keyword>
<keyword id="KW-1133">Transmembrane helix</keyword>
<keyword id="KW-0813">Transport</keyword>
<proteinExistence type="inferred from homology"/>
<name>COX2_RUSUN</name>
<accession>Q37440</accession>
<organism>
    <name type="scientific">Rusa unicolor</name>
    <name type="common">Sambar</name>
    <name type="synonym">Cervus unicolor</name>
    <dbReference type="NCBI Taxonomy" id="662561"/>
    <lineage>
        <taxon>Eukaryota</taxon>
        <taxon>Metazoa</taxon>
        <taxon>Chordata</taxon>
        <taxon>Craniata</taxon>
        <taxon>Vertebrata</taxon>
        <taxon>Euteleostomi</taxon>
        <taxon>Mammalia</taxon>
        <taxon>Eutheria</taxon>
        <taxon>Laurasiatheria</taxon>
        <taxon>Artiodactyla</taxon>
        <taxon>Ruminantia</taxon>
        <taxon>Pecora</taxon>
        <taxon>Cervidae</taxon>
        <taxon>Cervinae</taxon>
        <taxon>Rusa</taxon>
    </lineage>
</organism>
<comment type="function">
    <text evidence="3">Component of the cytochrome c oxidase, the last enzyme in the mitochondrial electron transport chain which drives oxidative phosphorylation. The respiratory chain contains 3 multisubunit complexes succinate dehydrogenase (complex II, CII), ubiquinol-cytochrome c oxidoreductase (cytochrome b-c1 complex, complex III, CIII) and cytochrome c oxidase (complex IV, CIV), that cooperate to transfer electrons derived from NADH and succinate to molecular oxygen, creating an electrochemical gradient over the inner membrane that drives transmembrane transport and the ATP synthase. Cytochrome c oxidase is the component of the respiratory chain that catalyzes the reduction of oxygen to water. Electrons originating from reduced cytochrome c in the intermembrane space (IMS) are transferred via the dinuclear copper A center (CU(A)) of subunit 2 and heme A of subunit 1 to the active site in subunit 1, a binuclear center (BNC) formed by heme A3 and copper B (CU(B)). The BNC reduces molecular oxygen to 2 water molecules using 4 electrons from cytochrome c in the IMS and 4 protons from the mitochondrial matrix.</text>
</comment>
<comment type="catalytic activity">
    <reaction evidence="3">
        <text>4 Fe(II)-[cytochrome c] + O2 + 8 H(+)(in) = 4 Fe(III)-[cytochrome c] + 2 H2O + 4 H(+)(out)</text>
        <dbReference type="Rhea" id="RHEA:11436"/>
        <dbReference type="Rhea" id="RHEA-COMP:10350"/>
        <dbReference type="Rhea" id="RHEA-COMP:14399"/>
        <dbReference type="ChEBI" id="CHEBI:15377"/>
        <dbReference type="ChEBI" id="CHEBI:15378"/>
        <dbReference type="ChEBI" id="CHEBI:15379"/>
        <dbReference type="ChEBI" id="CHEBI:29033"/>
        <dbReference type="ChEBI" id="CHEBI:29034"/>
        <dbReference type="EC" id="7.1.1.9"/>
    </reaction>
    <physiologicalReaction direction="left-to-right" evidence="3">
        <dbReference type="Rhea" id="RHEA:11437"/>
    </physiologicalReaction>
</comment>
<comment type="cofactor">
    <cofactor evidence="4">
        <name>Cu cation</name>
        <dbReference type="ChEBI" id="CHEBI:23378"/>
    </cofactor>
    <text evidence="4">Binds a dinuclear copper A center per subunit.</text>
</comment>
<comment type="subunit">
    <text evidence="1 4">Component of the cytochrome c oxidase (complex IV, CIV), a multisubunit enzyme composed of 14 subunits. The complex is composed of a catalytic core of 3 subunits MT-CO1, MT-CO2 and MT-CO3, encoded in the mitochondrial DNA, and 11 supernumerary subunits COX4I, COX5A, COX5B, COX6A, COX6B, COX6C, COX7A, COX7B, COX7C, COX8 and NDUFA4, which are encoded in the nuclear genome. The complex exists as a monomer or a dimer and forms supercomplexes (SCs) in the inner mitochondrial membrane with NADH-ubiquinone oxidoreductase (complex I, CI) and ubiquinol-cytochrome c oxidoreductase (cytochrome b-c1 complex, complex III, CIII), resulting in different assemblies (supercomplex SCI(1)III(2)IV(1) and megacomplex MCI(2)III(2)IV(2)) (By similarity). Found in a complex with TMEM177, COA6, COX18, COX20, SCO1 and SCO2. Interacts with TMEM177 in a COX20-dependent manner. Interacts with COX20. Interacts with COX16 (By similarity).</text>
</comment>
<comment type="subcellular location">
    <subcellularLocation>
        <location evidence="4">Mitochondrion inner membrane</location>
        <topology evidence="4">Multi-pass membrane protein</topology>
    </subcellularLocation>
</comment>
<comment type="similarity">
    <text evidence="5">Belongs to the cytochrome c oxidase subunit 2 family.</text>
</comment>
<sequence length="227" mass="26007">MAYPMQLGFQDATSPIMEELLHFHDHTLMIVFLISSLVLYVISLMLTTKLTHTSTMDAQEVETIWTILPAIILILIALPSLRILYMMDEINNPSLTVKTMGHQWYWSYEYTDYEDLSFDSYMIPTSELKPGELRLLEVDNRVVLPMEMTIRMLVSSEDVLHSWAVPSLGLKTDAIPGRLNQTTLMSTRPGLYYGQCSEICGSNHSFMPIVLELVPLNYFEKWSASML</sequence>
<evidence type="ECO:0000250" key="1">
    <source>
        <dbReference type="UniProtKB" id="P00403"/>
    </source>
</evidence>
<evidence type="ECO:0000250" key="2">
    <source>
        <dbReference type="UniProtKB" id="P00406"/>
    </source>
</evidence>
<evidence type="ECO:0000250" key="3">
    <source>
        <dbReference type="UniProtKB" id="P00410"/>
    </source>
</evidence>
<evidence type="ECO:0000250" key="4">
    <source>
        <dbReference type="UniProtKB" id="P68530"/>
    </source>
</evidence>
<evidence type="ECO:0000305" key="5"/>
<geneLocation type="mitochondrion"/>